<keyword id="KW-0008">Acetylcholine receptor inhibiting toxin</keyword>
<keyword id="KW-1015">Disulfide bond</keyword>
<keyword id="KW-0872">Ion channel impairing toxin</keyword>
<keyword id="KW-0528">Neurotoxin</keyword>
<keyword id="KW-0629">Postsynaptic neurotoxin</keyword>
<keyword id="KW-0964">Secreted</keyword>
<keyword id="KW-0732">Signal</keyword>
<keyword id="KW-0800">Toxin</keyword>
<reference key="1">
    <citation type="journal article" date="2007" name="Toxicon">
        <title>From the identification of gene organization of alpha conotoxins to the cloning of novel toxins.</title>
        <authorList>
            <person name="Yuan D.-D."/>
            <person name="Han Y.-H."/>
            <person name="Wang C.-G."/>
            <person name="Chi C.-W."/>
        </authorList>
    </citation>
    <scope>NUCLEOTIDE SEQUENCE [GENOMIC DNA / MRNA]</scope>
    <source>
        <tissue>Venom duct</tissue>
    </source>
</reference>
<evidence type="ECO:0000250" key="1"/>
<evidence type="ECO:0000255" key="2"/>
<evidence type="ECO:0000305" key="3"/>
<organism>
    <name type="scientific">Conus quercinus</name>
    <name type="common">Oak cone</name>
    <dbReference type="NCBI Taxonomy" id="101313"/>
    <lineage>
        <taxon>Eukaryota</taxon>
        <taxon>Metazoa</taxon>
        <taxon>Spiralia</taxon>
        <taxon>Lophotrochozoa</taxon>
        <taxon>Mollusca</taxon>
        <taxon>Gastropoda</taxon>
        <taxon>Caenogastropoda</taxon>
        <taxon>Neogastropoda</taxon>
        <taxon>Conoidea</taxon>
        <taxon>Conidae</taxon>
        <taxon>Conus</taxon>
        <taxon>Lividoconus</taxon>
    </lineage>
</organism>
<feature type="signal peptide" evidence="2">
    <location>
        <begin position="1"/>
        <end position="21"/>
    </location>
</feature>
<feature type="propeptide" id="PRO_0000370665" evidence="1">
    <location>
        <begin position="22"/>
        <end position="49"/>
    </location>
</feature>
<feature type="peptide" id="PRO_0000370666" description="Putative alpha-conotoxin Qc alphaL-1">
    <location>
        <begin position="50"/>
        <end position="68"/>
    </location>
</feature>
<feature type="disulfide bond" evidence="1">
    <location>
        <begin position="51"/>
        <end position="64"/>
    </location>
</feature>
<protein>
    <recommendedName>
        <fullName>Putative alpha-conotoxin Qc alphaL-1</fullName>
        <shortName>QcaL-1</shortName>
    </recommendedName>
</protein>
<name>CA1_CONQU</name>
<sequence>MGMRMMFTMFLLVVLATTVVSINLDHAFDGRNAAANNKATDLMARTVRRFCSDPPCRISNPESCGWEP</sequence>
<comment type="function">
    <text evidence="1">Alpha-conotoxins act on postsynaptic membranes, they bind to the nicotinic acetylcholine receptors (nAChR) and thus inhibit them.</text>
</comment>
<comment type="subcellular location">
    <subcellularLocation>
        <location evidence="1">Secreted</location>
    </subcellularLocation>
</comment>
<comment type="tissue specificity">
    <text>Expressed by the venom duct.</text>
</comment>
<comment type="domain">
    <text evidence="3">The cysteine framework is C-C-C.</text>
</comment>
<comment type="miscellaneous">
    <text>The mature peptide contains 3 cysteine residues.</text>
</comment>
<comment type="similarity">
    <text evidence="3">Belongs to the conotoxin A superfamily.</text>
</comment>
<comment type="caution">
    <text evidence="3">Could be the product of a pseudogene.</text>
</comment>
<dbReference type="EMBL" id="DQ311058">
    <property type="protein sequence ID" value="ABD33850.1"/>
    <property type="molecule type" value="Genomic_DNA"/>
</dbReference>
<dbReference type="EMBL" id="DQ311065">
    <property type="protein sequence ID" value="ABD33857.1"/>
    <property type="molecule type" value="mRNA"/>
</dbReference>
<dbReference type="TCDB" id="8.B.32.1.2">
    <property type="family name" value="the nicotinic acetylcholine receptor-targeting alpha-conotoxin (a-conotoxin) family"/>
</dbReference>
<dbReference type="ConoServer" id="548">
    <property type="toxin name" value="Qc aL-1 precursor"/>
</dbReference>
<dbReference type="ConoServer" id="555">
    <property type="toxin name" value="Qc aL-1 precursor"/>
</dbReference>
<dbReference type="GO" id="GO:0005576">
    <property type="term" value="C:extracellular region"/>
    <property type="evidence" value="ECO:0007669"/>
    <property type="project" value="UniProtKB-SubCell"/>
</dbReference>
<dbReference type="GO" id="GO:0035792">
    <property type="term" value="C:host cell postsynaptic membrane"/>
    <property type="evidence" value="ECO:0007669"/>
    <property type="project" value="UniProtKB-KW"/>
</dbReference>
<dbReference type="GO" id="GO:0030550">
    <property type="term" value="F:acetylcholine receptor inhibitor activity"/>
    <property type="evidence" value="ECO:0007669"/>
    <property type="project" value="UniProtKB-KW"/>
</dbReference>
<dbReference type="GO" id="GO:0099106">
    <property type="term" value="F:ion channel regulator activity"/>
    <property type="evidence" value="ECO:0007669"/>
    <property type="project" value="UniProtKB-KW"/>
</dbReference>
<dbReference type="GO" id="GO:0090729">
    <property type="term" value="F:toxin activity"/>
    <property type="evidence" value="ECO:0007669"/>
    <property type="project" value="UniProtKB-KW"/>
</dbReference>
<dbReference type="InterPro" id="IPR009958">
    <property type="entry name" value="Conotoxin_a-typ"/>
</dbReference>
<dbReference type="Pfam" id="PF07365">
    <property type="entry name" value="Toxin_8"/>
    <property type="match status" value="1"/>
</dbReference>
<accession>A1X8B8</accession>
<accession>A1X8C5</accession>
<proteinExistence type="uncertain"/>